<comment type="function">
    <text evidence="1">An aminoacyl-tRNA editing enzyme that deacylates mischarged D-aminoacyl-tRNAs. Also deacylates mischarged glycyl-tRNA(Ala), protecting cells against glycine mischarging by AlaRS. Acts via tRNA-based rather than protein-based catalysis; rejects L-amino acids rather than detecting D-amino acids in the active site. By recycling D-aminoacyl-tRNA to D-amino acids and free tRNA molecules, this enzyme counteracts the toxicity associated with the formation of D-aminoacyl-tRNA entities in vivo and helps enforce protein L-homochirality.</text>
</comment>
<comment type="catalytic activity">
    <reaction evidence="1">
        <text>glycyl-tRNA(Ala) + H2O = tRNA(Ala) + glycine + H(+)</text>
        <dbReference type="Rhea" id="RHEA:53744"/>
        <dbReference type="Rhea" id="RHEA-COMP:9657"/>
        <dbReference type="Rhea" id="RHEA-COMP:13640"/>
        <dbReference type="ChEBI" id="CHEBI:15377"/>
        <dbReference type="ChEBI" id="CHEBI:15378"/>
        <dbReference type="ChEBI" id="CHEBI:57305"/>
        <dbReference type="ChEBI" id="CHEBI:78442"/>
        <dbReference type="ChEBI" id="CHEBI:78522"/>
        <dbReference type="EC" id="3.1.1.96"/>
    </reaction>
</comment>
<comment type="catalytic activity">
    <reaction evidence="1">
        <text>a D-aminoacyl-tRNA + H2O = a tRNA + a D-alpha-amino acid + H(+)</text>
        <dbReference type="Rhea" id="RHEA:13953"/>
        <dbReference type="Rhea" id="RHEA-COMP:10123"/>
        <dbReference type="Rhea" id="RHEA-COMP:10124"/>
        <dbReference type="ChEBI" id="CHEBI:15377"/>
        <dbReference type="ChEBI" id="CHEBI:15378"/>
        <dbReference type="ChEBI" id="CHEBI:59871"/>
        <dbReference type="ChEBI" id="CHEBI:78442"/>
        <dbReference type="ChEBI" id="CHEBI:79333"/>
        <dbReference type="EC" id="3.1.1.96"/>
    </reaction>
</comment>
<comment type="subunit">
    <text evidence="1">Homodimer.</text>
</comment>
<comment type="subcellular location">
    <subcellularLocation>
        <location evidence="1">Cytoplasm</location>
    </subcellularLocation>
</comment>
<comment type="domain">
    <text evidence="1">A Gly-cisPro motif from one monomer fits into the active site of the other monomer to allow specific chiral rejection of L-amino acids.</text>
</comment>
<comment type="similarity">
    <text evidence="1">Belongs to the DTD family.</text>
</comment>
<organism>
    <name type="scientific">Syntrophobacter fumaroxidans (strain DSM 10017 / MPOB)</name>
    <dbReference type="NCBI Taxonomy" id="335543"/>
    <lineage>
        <taxon>Bacteria</taxon>
        <taxon>Pseudomonadati</taxon>
        <taxon>Thermodesulfobacteriota</taxon>
        <taxon>Syntrophobacteria</taxon>
        <taxon>Syntrophobacterales</taxon>
        <taxon>Syntrophobacteraceae</taxon>
        <taxon>Syntrophobacter</taxon>
    </lineage>
</organism>
<accession>A0LL48</accession>
<feature type="chain" id="PRO_1000050899" description="D-aminoacyl-tRNA deacylase">
    <location>
        <begin position="1"/>
        <end position="149"/>
    </location>
</feature>
<feature type="short sequence motif" description="Gly-cisPro motif, important for rejection of L-amino acids" evidence="1">
    <location>
        <begin position="137"/>
        <end position="138"/>
    </location>
</feature>
<proteinExistence type="inferred from homology"/>
<name>DTD_SYNFM</name>
<keyword id="KW-0963">Cytoplasm</keyword>
<keyword id="KW-0378">Hydrolase</keyword>
<keyword id="KW-1185">Reference proteome</keyword>
<keyword id="KW-0694">RNA-binding</keyword>
<keyword id="KW-0820">tRNA-binding</keyword>
<evidence type="ECO:0000255" key="1">
    <source>
        <dbReference type="HAMAP-Rule" id="MF_00518"/>
    </source>
</evidence>
<dbReference type="EC" id="3.1.1.96" evidence="1"/>
<dbReference type="EMBL" id="CP000478">
    <property type="protein sequence ID" value="ABK18150.1"/>
    <property type="molecule type" value="Genomic_DNA"/>
</dbReference>
<dbReference type="RefSeq" id="WP_011699318.1">
    <property type="nucleotide sequence ID" value="NC_008554.1"/>
</dbReference>
<dbReference type="SMR" id="A0LL48"/>
<dbReference type="FunCoup" id="A0LL48">
    <property type="interactions" value="448"/>
</dbReference>
<dbReference type="STRING" id="335543.Sfum_2470"/>
<dbReference type="KEGG" id="sfu:Sfum_2470"/>
<dbReference type="eggNOG" id="COG1490">
    <property type="taxonomic scope" value="Bacteria"/>
</dbReference>
<dbReference type="HOGENOM" id="CLU_076901_1_0_7"/>
<dbReference type="InParanoid" id="A0LL48"/>
<dbReference type="OrthoDB" id="9801395at2"/>
<dbReference type="Proteomes" id="UP000001784">
    <property type="component" value="Chromosome"/>
</dbReference>
<dbReference type="GO" id="GO:0005737">
    <property type="term" value="C:cytoplasm"/>
    <property type="evidence" value="ECO:0007669"/>
    <property type="project" value="UniProtKB-SubCell"/>
</dbReference>
<dbReference type="GO" id="GO:0051500">
    <property type="term" value="F:D-tyrosyl-tRNA(Tyr) deacylase activity"/>
    <property type="evidence" value="ECO:0007669"/>
    <property type="project" value="TreeGrafter"/>
</dbReference>
<dbReference type="GO" id="GO:0106026">
    <property type="term" value="F:Gly-tRNA(Ala) deacylase activity"/>
    <property type="evidence" value="ECO:0007669"/>
    <property type="project" value="UniProtKB-UniRule"/>
</dbReference>
<dbReference type="GO" id="GO:0043908">
    <property type="term" value="F:Ser(Gly)-tRNA(Ala) hydrolase activity"/>
    <property type="evidence" value="ECO:0007669"/>
    <property type="project" value="UniProtKB-UniRule"/>
</dbReference>
<dbReference type="GO" id="GO:0000049">
    <property type="term" value="F:tRNA binding"/>
    <property type="evidence" value="ECO:0007669"/>
    <property type="project" value="UniProtKB-UniRule"/>
</dbReference>
<dbReference type="GO" id="GO:0019478">
    <property type="term" value="P:D-amino acid catabolic process"/>
    <property type="evidence" value="ECO:0007669"/>
    <property type="project" value="UniProtKB-UniRule"/>
</dbReference>
<dbReference type="CDD" id="cd00563">
    <property type="entry name" value="Dtyr_deacylase"/>
    <property type="match status" value="1"/>
</dbReference>
<dbReference type="FunFam" id="3.50.80.10:FF:000001">
    <property type="entry name" value="D-aminoacyl-tRNA deacylase"/>
    <property type="match status" value="1"/>
</dbReference>
<dbReference type="Gene3D" id="3.50.80.10">
    <property type="entry name" value="D-tyrosyl-tRNA(Tyr) deacylase"/>
    <property type="match status" value="1"/>
</dbReference>
<dbReference type="HAMAP" id="MF_00518">
    <property type="entry name" value="Deacylase_Dtd"/>
    <property type="match status" value="1"/>
</dbReference>
<dbReference type="InterPro" id="IPR003732">
    <property type="entry name" value="Daa-tRNA_deacyls_DTD"/>
</dbReference>
<dbReference type="InterPro" id="IPR023509">
    <property type="entry name" value="DTD-like_sf"/>
</dbReference>
<dbReference type="NCBIfam" id="TIGR00256">
    <property type="entry name" value="D-aminoacyl-tRNA deacylase"/>
    <property type="match status" value="1"/>
</dbReference>
<dbReference type="PANTHER" id="PTHR10472:SF5">
    <property type="entry name" value="D-AMINOACYL-TRNA DEACYLASE 1"/>
    <property type="match status" value="1"/>
</dbReference>
<dbReference type="PANTHER" id="PTHR10472">
    <property type="entry name" value="D-TYROSYL-TRNA TYR DEACYLASE"/>
    <property type="match status" value="1"/>
</dbReference>
<dbReference type="Pfam" id="PF02580">
    <property type="entry name" value="Tyr_Deacylase"/>
    <property type="match status" value="1"/>
</dbReference>
<dbReference type="SUPFAM" id="SSF69500">
    <property type="entry name" value="DTD-like"/>
    <property type="match status" value="1"/>
</dbReference>
<reference key="1">
    <citation type="submission" date="2006-10" db="EMBL/GenBank/DDBJ databases">
        <title>Complete sequence of Syntrophobacter fumaroxidans MPOB.</title>
        <authorList>
            <consortium name="US DOE Joint Genome Institute"/>
            <person name="Copeland A."/>
            <person name="Lucas S."/>
            <person name="Lapidus A."/>
            <person name="Barry K."/>
            <person name="Detter J.C."/>
            <person name="Glavina del Rio T."/>
            <person name="Hammon N."/>
            <person name="Israni S."/>
            <person name="Pitluck S."/>
            <person name="Goltsman E.G."/>
            <person name="Martinez M."/>
            <person name="Schmutz J."/>
            <person name="Larimer F."/>
            <person name="Land M."/>
            <person name="Hauser L."/>
            <person name="Kyrpides N."/>
            <person name="Kim E."/>
            <person name="Boone D.R."/>
            <person name="Brockman F."/>
            <person name="Culley D."/>
            <person name="Ferry J."/>
            <person name="Gunsalus R."/>
            <person name="McInerney M.J."/>
            <person name="Morrison M."/>
            <person name="Plugge C."/>
            <person name="Rohlin L."/>
            <person name="Scholten J."/>
            <person name="Sieber J."/>
            <person name="Stams A.J.M."/>
            <person name="Worm P."/>
            <person name="Henstra A.M."/>
            <person name="Richardson P."/>
        </authorList>
    </citation>
    <scope>NUCLEOTIDE SEQUENCE [LARGE SCALE GENOMIC DNA]</scope>
    <source>
        <strain>DSM 10017 / MPOB</strain>
    </source>
</reference>
<protein>
    <recommendedName>
        <fullName evidence="1">D-aminoacyl-tRNA deacylase</fullName>
        <shortName evidence="1">DTD</shortName>
        <ecNumber evidence="1">3.1.1.96</ecNumber>
    </recommendedName>
    <alternativeName>
        <fullName evidence="1">Gly-tRNA(Ala) deacylase</fullName>
    </alternativeName>
</protein>
<sequence>MRAVVQRVAEASVTVNGEETGRIGKGVLVFLGVGPDDGSGDIRYLSEKIVNLRIFPDASDKMNLSVREVGGGVLVISQFTLFGDCRKGRRPSYAGAAPPELARRLYGEFVEELKKQAVPVATGMFQEMMRVHLVNDGPVTLLLDSRKVF</sequence>
<gene>
    <name evidence="1" type="primary">dtd</name>
    <name type="ordered locus">Sfum_2470</name>
</gene>